<comment type="function">
    <text evidence="3 6 7">Catalyzes the reaction that attaches fucose through an O-glycosidic linkage to a conserved serine or threonine residue found in the consensus sequence C2-X(4,5)-[S/T]-C3 of EGF domains, where C2 and C3 are the second and third conserved cysteines. Specifically uses GDP-fucose as donor substrate and proper disulfide pairing of the substrate EGF domains is required for fucose transfer. Plays a crucial role in NOTCH signaling. Initial fucosylation of NOTCH by POFUT1 generates a substrate for FRINGE/RFNG, an acetylglucosaminyltransferase that can then extend the fucosylation on the NOTCH EGF repeats. This extended fucosylation is required for optimal ligand binding and canonical NOTCH signaling induced by DLL1 or JAGGED1. Fucosylates AGRN and determines its ability to cluster acetylcholine receptors (AChRs).</text>
</comment>
<comment type="catalytic activity">
    <reaction evidence="3">
        <text>L-seryl-[protein] + GDP-beta-L-fucose = 3-O-(alpha-L-fucosyl)-L-seryl-[protein] + GDP + H(+)</text>
        <dbReference type="Rhea" id="RHEA:63644"/>
        <dbReference type="Rhea" id="RHEA-COMP:9863"/>
        <dbReference type="Rhea" id="RHEA-COMP:17914"/>
        <dbReference type="ChEBI" id="CHEBI:15378"/>
        <dbReference type="ChEBI" id="CHEBI:29999"/>
        <dbReference type="ChEBI" id="CHEBI:57273"/>
        <dbReference type="ChEBI" id="CHEBI:58189"/>
        <dbReference type="ChEBI" id="CHEBI:189632"/>
        <dbReference type="EC" id="2.4.1.221"/>
    </reaction>
    <physiologicalReaction direction="left-to-right" evidence="3">
        <dbReference type="Rhea" id="RHEA:63645"/>
    </physiologicalReaction>
</comment>
<comment type="catalytic activity">
    <reaction evidence="3">
        <text>L-threonyl-[protein] + GDP-beta-L-fucose = 3-O-(alpha-L-fucosyl)-L-threonyl-[protein] + GDP + H(+)</text>
        <dbReference type="Rhea" id="RHEA:70491"/>
        <dbReference type="Rhea" id="RHEA-COMP:11060"/>
        <dbReference type="Rhea" id="RHEA-COMP:17915"/>
        <dbReference type="ChEBI" id="CHEBI:15378"/>
        <dbReference type="ChEBI" id="CHEBI:30013"/>
        <dbReference type="ChEBI" id="CHEBI:57273"/>
        <dbReference type="ChEBI" id="CHEBI:58189"/>
        <dbReference type="ChEBI" id="CHEBI:189631"/>
        <dbReference type="EC" id="2.4.1.221"/>
    </reaction>
    <physiologicalReaction direction="left-to-right" evidence="3">
        <dbReference type="Rhea" id="RHEA:70492"/>
    </physiologicalReaction>
</comment>
<comment type="biophysicochemical properties">
    <kinetics>
        <KM evidence="3">6 uM for F7 EGF domain</KM>
        <KM evidence="3">4 uM for GDP-fucose</KM>
        <Vmax evidence="3">3.0 umol/min/mg enzyme</Vmax>
    </kinetics>
</comment>
<comment type="pathway">
    <text evidence="3">Protein modification; protein glycosylation.</text>
</comment>
<comment type="subcellular location">
    <subcellularLocation>
        <location evidence="1">Endoplasmic reticulum</location>
    </subcellularLocation>
</comment>
<comment type="alternative products">
    <event type="alternative splicing"/>
    <isoform>
        <id>Q9H488-1</id>
        <name>1</name>
        <sequence type="displayed"/>
    </isoform>
    <isoform>
        <id>Q9H488-2</id>
        <name>2</name>
        <sequence type="described" ref="VSP_001809"/>
    </isoform>
</comment>
<comment type="tissue specificity">
    <text evidence="3">Highly expressed in heart, brain, placenta, lung, liver, skeletal muscle, kidney and pancreas.</text>
</comment>
<comment type="PTM">
    <text evidence="4">N-glycosylated.</text>
</comment>
<comment type="disease" evidence="5">
    <disease id="DI-03821">
        <name>Dowling-Degos disease 2</name>
        <acronym>DDD2</acronym>
        <description>An autosomal dominant genodermatosis. Affected individuals develop a postpubertal reticulate hyperpigmentation that is progressive and disfiguring, and small hyperkeratotic dark brown papules that affect mainly the flexures and great skin folds. Patients usually show no abnormalities of the hair or nails.</description>
        <dbReference type="MIM" id="615327"/>
    </disease>
    <text>The disease is caused by variants affecting the gene represented in this entry.</text>
</comment>
<comment type="similarity">
    <text evidence="9">Belongs to the glycosyltransferase 65 family.</text>
</comment>
<comment type="online information" name="Functional Glycomics Gateway - GTase">
    <link uri="http://www.functionalglycomics.org/glycomics/molecule/jsp/glycoEnzyme/viewGlycoEnzyme.jsp?gbpId=gt_hum_609"/>
    <text>Peptide-O-fucosyltransferase 1</text>
</comment>
<accession>Q9H488</accession>
<accession>A8K4R8</accession>
<accession>E1P5M4</accession>
<accession>Q14685</accession>
<accession>Q5W185</accession>
<accession>Q9BW76</accession>
<gene>
    <name type="primary">POFUT1</name>
    <name type="synonym">FUT12</name>
    <name type="synonym">KIAA0180</name>
</gene>
<organism>
    <name type="scientific">Homo sapiens</name>
    <name type="common">Human</name>
    <dbReference type="NCBI Taxonomy" id="9606"/>
    <lineage>
        <taxon>Eukaryota</taxon>
        <taxon>Metazoa</taxon>
        <taxon>Chordata</taxon>
        <taxon>Craniata</taxon>
        <taxon>Vertebrata</taxon>
        <taxon>Euteleostomi</taxon>
        <taxon>Mammalia</taxon>
        <taxon>Eutheria</taxon>
        <taxon>Euarchontoglires</taxon>
        <taxon>Primates</taxon>
        <taxon>Haplorrhini</taxon>
        <taxon>Catarrhini</taxon>
        <taxon>Hominidae</taxon>
        <taxon>Homo</taxon>
    </lineage>
</organism>
<evidence type="ECO:0000250" key="1">
    <source>
        <dbReference type="UniProtKB" id="Q6EV70"/>
    </source>
</evidence>
<evidence type="ECO:0000255" key="2"/>
<evidence type="ECO:0000269" key="3">
    <source>
    </source>
</evidence>
<evidence type="ECO:0000269" key="4">
    <source>
    </source>
</evidence>
<evidence type="ECO:0000269" key="5">
    <source>
    </source>
</evidence>
<evidence type="ECO:0000269" key="6">
    <source>
    </source>
</evidence>
<evidence type="ECO:0000269" key="7">
    <source>
    </source>
</evidence>
<evidence type="ECO:0000303" key="8">
    <source>
    </source>
</evidence>
<evidence type="ECO:0000305" key="9"/>
<evidence type="ECO:0007744" key="10">
    <source>
        <dbReference type="PDB" id="5UX6"/>
    </source>
</evidence>
<evidence type="ECO:0007744" key="11">
    <source>
        <dbReference type="PDB" id="5UXH"/>
    </source>
</evidence>
<evidence type="ECO:0007829" key="12">
    <source>
        <dbReference type="PDB" id="5UX6"/>
    </source>
</evidence>
<evidence type="ECO:0007829" key="13">
    <source>
        <dbReference type="PDB" id="5UXH"/>
    </source>
</evidence>
<dbReference type="EC" id="2.4.1.221" evidence="3"/>
<dbReference type="EMBL" id="AF375884">
    <property type="protein sequence ID" value="AAL09576.1"/>
    <property type="molecule type" value="mRNA"/>
</dbReference>
<dbReference type="EMBL" id="D80002">
    <property type="protein sequence ID" value="BAA11497.2"/>
    <property type="molecule type" value="mRNA"/>
</dbReference>
<dbReference type="EMBL" id="AL121897">
    <property type="status" value="NOT_ANNOTATED_CDS"/>
    <property type="molecule type" value="Genomic_DNA"/>
</dbReference>
<dbReference type="EMBL" id="AK291033">
    <property type="protein sequence ID" value="BAF83722.1"/>
    <property type="molecule type" value="mRNA"/>
</dbReference>
<dbReference type="EMBL" id="CH471077">
    <property type="protein sequence ID" value="EAW76383.1"/>
    <property type="molecule type" value="Genomic_DNA"/>
</dbReference>
<dbReference type="EMBL" id="CH471077">
    <property type="protein sequence ID" value="EAW76384.1"/>
    <property type="molecule type" value="Genomic_DNA"/>
</dbReference>
<dbReference type="EMBL" id="CH471077">
    <property type="protein sequence ID" value="EAW76385.1"/>
    <property type="molecule type" value="Genomic_DNA"/>
</dbReference>
<dbReference type="EMBL" id="BC000582">
    <property type="protein sequence ID" value="AAH00582.1"/>
    <property type="molecule type" value="mRNA"/>
</dbReference>
<dbReference type="CCDS" id="CCDS13198.1">
    <molecule id="Q9H488-1"/>
</dbReference>
<dbReference type="CCDS" id="CCDS13199.1">
    <molecule id="Q9H488-2"/>
</dbReference>
<dbReference type="RefSeq" id="NP_056167.1">
    <molecule id="Q9H488-1"/>
    <property type="nucleotide sequence ID" value="NM_015352.2"/>
</dbReference>
<dbReference type="RefSeq" id="NP_758436.1">
    <molecule id="Q9H488-2"/>
    <property type="nucleotide sequence ID" value="NM_172236.2"/>
</dbReference>
<dbReference type="PDB" id="5UX6">
    <property type="method" value="X-ray"/>
    <property type="resolution" value="2.09 A"/>
    <property type="chains" value="A/B=24-384"/>
</dbReference>
<dbReference type="PDB" id="5UXH">
    <property type="method" value="X-ray"/>
    <property type="resolution" value="2.41 A"/>
    <property type="chains" value="A/B=24-384"/>
</dbReference>
<dbReference type="PDBsum" id="5UX6"/>
<dbReference type="PDBsum" id="5UXH"/>
<dbReference type="SMR" id="Q9H488"/>
<dbReference type="BioGRID" id="117056">
    <property type="interactions" value="58"/>
</dbReference>
<dbReference type="FunCoup" id="Q9H488">
    <property type="interactions" value="2236"/>
</dbReference>
<dbReference type="IntAct" id="Q9H488">
    <property type="interactions" value="11"/>
</dbReference>
<dbReference type="STRING" id="9606.ENSP00000364902"/>
<dbReference type="CAZy" id="GT65">
    <property type="family name" value="Glycosyltransferase Family 65"/>
</dbReference>
<dbReference type="GlyConnect" id="1266">
    <property type="glycosylation" value="1 N-Linked glycan (1 site)"/>
</dbReference>
<dbReference type="GlyCosmos" id="Q9H488">
    <property type="glycosylation" value="2 sites, 1 glycan"/>
</dbReference>
<dbReference type="GlyGen" id="Q9H488">
    <property type="glycosylation" value="3 sites, 16 N-linked glycans (1 site), 1 O-linked glycan (1 site)"/>
</dbReference>
<dbReference type="iPTMnet" id="Q9H488"/>
<dbReference type="MetOSite" id="Q9H488"/>
<dbReference type="PhosphoSitePlus" id="Q9H488"/>
<dbReference type="SwissPalm" id="Q9H488"/>
<dbReference type="BioMuta" id="POFUT1"/>
<dbReference type="DMDM" id="23396787"/>
<dbReference type="CPTAC" id="CPTAC-1506"/>
<dbReference type="jPOST" id="Q9H488"/>
<dbReference type="MassIVE" id="Q9H488"/>
<dbReference type="PaxDb" id="9606-ENSP00000364902"/>
<dbReference type="PeptideAtlas" id="Q9H488"/>
<dbReference type="ProteomicsDB" id="80793">
    <molecule id="Q9H488-1"/>
</dbReference>
<dbReference type="ProteomicsDB" id="80794">
    <molecule id="Q9H488-2"/>
</dbReference>
<dbReference type="Pumba" id="Q9H488"/>
<dbReference type="Antibodypedia" id="25350">
    <property type="antibodies" value="226 antibodies from 31 providers"/>
</dbReference>
<dbReference type="DNASU" id="23509"/>
<dbReference type="Ensembl" id="ENST00000375730.3">
    <molecule id="Q9H488-2"/>
    <property type="protein sequence ID" value="ENSP00000364882.3"/>
    <property type="gene ID" value="ENSG00000101346.15"/>
</dbReference>
<dbReference type="Ensembl" id="ENST00000375749.8">
    <molecule id="Q9H488-1"/>
    <property type="protein sequence ID" value="ENSP00000364902.3"/>
    <property type="gene ID" value="ENSG00000101346.15"/>
</dbReference>
<dbReference type="GeneID" id="23509"/>
<dbReference type="KEGG" id="hsa:23509"/>
<dbReference type="MANE-Select" id="ENST00000375749.8">
    <property type="protein sequence ID" value="ENSP00000364902.3"/>
    <property type="RefSeq nucleotide sequence ID" value="NM_015352.2"/>
    <property type="RefSeq protein sequence ID" value="NP_056167.1"/>
</dbReference>
<dbReference type="UCSC" id="uc002wxo.3">
    <molecule id="Q9H488-1"/>
    <property type="organism name" value="human"/>
</dbReference>
<dbReference type="AGR" id="HGNC:14988"/>
<dbReference type="CTD" id="23509"/>
<dbReference type="DisGeNET" id="23509"/>
<dbReference type="GeneCards" id="POFUT1"/>
<dbReference type="HGNC" id="HGNC:14988">
    <property type="gene designation" value="POFUT1"/>
</dbReference>
<dbReference type="HPA" id="ENSG00000101346">
    <property type="expression patterns" value="Low tissue specificity"/>
</dbReference>
<dbReference type="MalaCards" id="POFUT1"/>
<dbReference type="MIM" id="607491">
    <property type="type" value="gene"/>
</dbReference>
<dbReference type="MIM" id="615327">
    <property type="type" value="phenotype"/>
</dbReference>
<dbReference type="neXtProt" id="NX_Q9H488"/>
<dbReference type="OpenTargets" id="ENSG00000101346"/>
<dbReference type="Orphanet" id="79145">
    <property type="disease" value="Dowling-Degos disease"/>
</dbReference>
<dbReference type="PharmGKB" id="PA33495"/>
<dbReference type="VEuPathDB" id="HostDB:ENSG00000101346"/>
<dbReference type="eggNOG" id="KOG3849">
    <property type="taxonomic scope" value="Eukaryota"/>
</dbReference>
<dbReference type="GeneTree" id="ENSGT00390000015634"/>
<dbReference type="HOGENOM" id="CLU_039551_0_0_1"/>
<dbReference type="InParanoid" id="Q9H488"/>
<dbReference type="OMA" id="WQNACRL"/>
<dbReference type="OrthoDB" id="10050276at2759"/>
<dbReference type="PAN-GO" id="Q9H488">
    <property type="GO annotations" value="4 GO annotations based on evolutionary models"/>
</dbReference>
<dbReference type="PhylomeDB" id="Q9H488"/>
<dbReference type="TreeFam" id="TF314805"/>
<dbReference type="BRENDA" id="2.4.1.221">
    <property type="organism ID" value="2681"/>
</dbReference>
<dbReference type="PathwayCommons" id="Q9H488"/>
<dbReference type="Reactome" id="R-HSA-1912399">
    <property type="pathway name" value="Pre-NOTCH Processing in the Endoplasmic Reticulum"/>
</dbReference>
<dbReference type="SignaLink" id="Q9H488"/>
<dbReference type="SIGNOR" id="Q9H488"/>
<dbReference type="UniPathway" id="UPA00378"/>
<dbReference type="BioGRID-ORCS" id="23509">
    <property type="hits" value="21 hits in 1159 CRISPR screens"/>
</dbReference>
<dbReference type="ChiTaRS" id="POFUT1">
    <property type="organism name" value="human"/>
</dbReference>
<dbReference type="GenomeRNAi" id="23509"/>
<dbReference type="Pharos" id="Q9H488">
    <property type="development level" value="Tbio"/>
</dbReference>
<dbReference type="PRO" id="PR:Q9H488"/>
<dbReference type="Proteomes" id="UP000005640">
    <property type="component" value="Chromosome 20"/>
</dbReference>
<dbReference type="RNAct" id="Q9H488">
    <property type="molecule type" value="protein"/>
</dbReference>
<dbReference type="Bgee" id="ENSG00000101346">
    <property type="expression patterns" value="Expressed in stromal cell of endometrium and 98 other cell types or tissues"/>
</dbReference>
<dbReference type="GO" id="GO:0005783">
    <property type="term" value="C:endoplasmic reticulum"/>
    <property type="evidence" value="ECO:0000314"/>
    <property type="project" value="UniProtKB"/>
</dbReference>
<dbReference type="GO" id="GO:0016020">
    <property type="term" value="C:membrane"/>
    <property type="evidence" value="ECO:0000314"/>
    <property type="project" value="UniProtKB"/>
</dbReference>
<dbReference type="GO" id="GO:0046922">
    <property type="term" value="F:peptide-O-fucosyltransferase activity"/>
    <property type="evidence" value="ECO:0000314"/>
    <property type="project" value="UniProtKB"/>
</dbReference>
<dbReference type="GO" id="GO:0001525">
    <property type="term" value="P:angiogenesis"/>
    <property type="evidence" value="ECO:0007669"/>
    <property type="project" value="Ensembl"/>
</dbReference>
<dbReference type="GO" id="GO:0006004">
    <property type="term" value="P:fucose metabolic process"/>
    <property type="evidence" value="ECO:0007669"/>
    <property type="project" value="UniProtKB-KW"/>
</dbReference>
<dbReference type="GO" id="GO:0007507">
    <property type="term" value="P:heart development"/>
    <property type="evidence" value="ECO:0007669"/>
    <property type="project" value="Ensembl"/>
</dbReference>
<dbReference type="GO" id="GO:0007399">
    <property type="term" value="P:nervous system development"/>
    <property type="evidence" value="ECO:0007669"/>
    <property type="project" value="Ensembl"/>
</dbReference>
<dbReference type="GO" id="GO:0007219">
    <property type="term" value="P:Notch signaling pathway"/>
    <property type="evidence" value="ECO:0007669"/>
    <property type="project" value="UniProtKB-KW"/>
</dbReference>
<dbReference type="GO" id="GO:0036066">
    <property type="term" value="P:protein O-linked fucosylation"/>
    <property type="evidence" value="ECO:0000314"/>
    <property type="project" value="UniProtKB"/>
</dbReference>
<dbReference type="GO" id="GO:0008593">
    <property type="term" value="P:regulation of Notch signaling pathway"/>
    <property type="evidence" value="ECO:0000315"/>
    <property type="project" value="UniProtKB"/>
</dbReference>
<dbReference type="GO" id="GO:0001756">
    <property type="term" value="P:somitogenesis"/>
    <property type="evidence" value="ECO:0007669"/>
    <property type="project" value="Ensembl"/>
</dbReference>
<dbReference type="CDD" id="cd11302">
    <property type="entry name" value="O-FucT-1"/>
    <property type="match status" value="1"/>
</dbReference>
<dbReference type="FunFam" id="3.40.50.11340:FF:000001">
    <property type="entry name" value="GDP-fucose protein O-fucosyltransferase 1"/>
    <property type="match status" value="1"/>
</dbReference>
<dbReference type="FunFam" id="3.40.50.11350:FF:000004">
    <property type="entry name" value="GDP-fucose protein O-fucosyltransferase 1"/>
    <property type="match status" value="1"/>
</dbReference>
<dbReference type="Gene3D" id="3.40.50.11340">
    <property type="match status" value="1"/>
</dbReference>
<dbReference type="Gene3D" id="3.40.50.11350">
    <property type="match status" value="1"/>
</dbReference>
<dbReference type="InterPro" id="IPR019378">
    <property type="entry name" value="GDP-Fuc_O-FucTrfase"/>
</dbReference>
<dbReference type="InterPro" id="IPR039922">
    <property type="entry name" value="POFUT1"/>
</dbReference>
<dbReference type="PANTHER" id="PTHR21420">
    <property type="entry name" value="GDP-FUCOSE PROTEIN O-FUCOSYLTRANSFERASE 1"/>
    <property type="match status" value="1"/>
</dbReference>
<dbReference type="PANTHER" id="PTHR21420:SF3">
    <property type="entry name" value="GDP-FUCOSE PROTEIN O-FUCOSYLTRANSFERASE 1"/>
    <property type="match status" value="1"/>
</dbReference>
<dbReference type="Pfam" id="PF10250">
    <property type="entry name" value="O-FucT"/>
    <property type="match status" value="1"/>
</dbReference>
<keyword id="KW-0002">3D-structure</keyword>
<keyword id="KW-0025">Alternative splicing</keyword>
<keyword id="KW-0119">Carbohydrate metabolism</keyword>
<keyword id="KW-1015">Disulfide bond</keyword>
<keyword id="KW-0256">Endoplasmic reticulum</keyword>
<keyword id="KW-0294">Fucose metabolism</keyword>
<keyword id="KW-0325">Glycoprotein</keyword>
<keyword id="KW-0328">Glycosyltransferase</keyword>
<keyword id="KW-0464">Manganese</keyword>
<keyword id="KW-0914">Notch signaling pathway</keyword>
<keyword id="KW-1267">Proteomics identification</keyword>
<keyword id="KW-1185">Reference proteome</keyword>
<keyword id="KW-0732">Signal</keyword>
<keyword id="KW-0808">Transferase</keyword>
<reference key="1">
    <citation type="journal article" date="2001" name="J. Biol. Chem.">
        <title>Modification of epidermal growth factor-like repeats with O-fucose: molecular cloning and expression of a novel GDP-fucose protein O-fucosyltransferase.</title>
        <authorList>
            <person name="Wang Y."/>
            <person name="Shao L."/>
            <person name="Shi S."/>
            <person name="Harris R.J."/>
            <person name="Spellman M.W."/>
            <person name="Stanley P."/>
            <person name="Haltiwanger R.S."/>
        </authorList>
    </citation>
    <scope>NUCLEOTIDE SEQUENCE [MRNA] (ISOFORM 1)</scope>
    <scope>FUNCTION</scope>
    <scope>CATALYTIC ACTIVITY</scope>
    <scope>BIOPHYSICOCHEMICAL PROPERTIES</scope>
    <scope>TISSUE SPECIFICITY</scope>
    <source>
        <tissue>Heart</tissue>
    </source>
</reference>
<reference key="2">
    <citation type="journal article" date="1996" name="DNA Res.">
        <title>Prediction of the coding sequences of unidentified human genes. V. The coding sequences of 40 new genes (KIAA0161-KIAA0200) deduced by analysis of cDNA clones from human cell line KG-1.</title>
        <authorList>
            <person name="Nagase T."/>
            <person name="Seki N."/>
            <person name="Ishikawa K."/>
            <person name="Tanaka A."/>
            <person name="Nomura N."/>
        </authorList>
    </citation>
    <scope>NUCLEOTIDE SEQUENCE [LARGE SCALE MRNA] (ISOFORM 1)</scope>
    <source>
        <tissue>Bone marrow</tissue>
    </source>
</reference>
<reference key="3">
    <citation type="journal article" date="2002" name="DNA Res.">
        <title>Construction of expression-ready cDNA clones for KIAA genes: manual curation of 330 KIAA cDNA clones.</title>
        <authorList>
            <person name="Nakajima D."/>
            <person name="Okazaki N."/>
            <person name="Yamakawa H."/>
            <person name="Kikuno R."/>
            <person name="Ohara O."/>
            <person name="Nagase T."/>
        </authorList>
    </citation>
    <scope>SEQUENCE REVISION</scope>
</reference>
<reference key="4">
    <citation type="journal article" date="2004" name="Nat. Genet.">
        <title>Complete sequencing and characterization of 21,243 full-length human cDNAs.</title>
        <authorList>
            <person name="Ota T."/>
            <person name="Suzuki Y."/>
            <person name="Nishikawa T."/>
            <person name="Otsuki T."/>
            <person name="Sugiyama T."/>
            <person name="Irie R."/>
            <person name="Wakamatsu A."/>
            <person name="Hayashi K."/>
            <person name="Sato H."/>
            <person name="Nagai K."/>
            <person name="Kimura K."/>
            <person name="Makita H."/>
            <person name="Sekine M."/>
            <person name="Obayashi M."/>
            <person name="Nishi T."/>
            <person name="Shibahara T."/>
            <person name="Tanaka T."/>
            <person name="Ishii S."/>
            <person name="Yamamoto J."/>
            <person name="Saito K."/>
            <person name="Kawai Y."/>
            <person name="Isono Y."/>
            <person name="Nakamura Y."/>
            <person name="Nagahari K."/>
            <person name="Murakami K."/>
            <person name="Yasuda T."/>
            <person name="Iwayanagi T."/>
            <person name="Wagatsuma M."/>
            <person name="Shiratori A."/>
            <person name="Sudo H."/>
            <person name="Hosoiri T."/>
            <person name="Kaku Y."/>
            <person name="Kodaira H."/>
            <person name="Kondo H."/>
            <person name="Sugawara M."/>
            <person name="Takahashi M."/>
            <person name="Kanda K."/>
            <person name="Yokoi T."/>
            <person name="Furuya T."/>
            <person name="Kikkawa E."/>
            <person name="Omura Y."/>
            <person name="Abe K."/>
            <person name="Kamihara K."/>
            <person name="Katsuta N."/>
            <person name="Sato K."/>
            <person name="Tanikawa M."/>
            <person name="Yamazaki M."/>
            <person name="Ninomiya K."/>
            <person name="Ishibashi T."/>
            <person name="Yamashita H."/>
            <person name="Murakawa K."/>
            <person name="Fujimori K."/>
            <person name="Tanai H."/>
            <person name="Kimata M."/>
            <person name="Watanabe M."/>
            <person name="Hiraoka S."/>
            <person name="Chiba Y."/>
            <person name="Ishida S."/>
            <person name="Ono Y."/>
            <person name="Takiguchi S."/>
            <person name="Watanabe S."/>
            <person name="Yosida M."/>
            <person name="Hotuta T."/>
            <person name="Kusano J."/>
            <person name="Kanehori K."/>
            <person name="Takahashi-Fujii A."/>
            <person name="Hara H."/>
            <person name="Tanase T.-O."/>
            <person name="Nomura Y."/>
            <person name="Togiya S."/>
            <person name="Komai F."/>
            <person name="Hara R."/>
            <person name="Takeuchi K."/>
            <person name="Arita M."/>
            <person name="Imose N."/>
            <person name="Musashino K."/>
            <person name="Yuuki H."/>
            <person name="Oshima A."/>
            <person name="Sasaki N."/>
            <person name="Aotsuka S."/>
            <person name="Yoshikawa Y."/>
            <person name="Matsunawa H."/>
            <person name="Ichihara T."/>
            <person name="Shiohata N."/>
            <person name="Sano S."/>
            <person name="Moriya S."/>
            <person name="Momiyama H."/>
            <person name="Satoh N."/>
            <person name="Takami S."/>
            <person name="Terashima Y."/>
            <person name="Suzuki O."/>
            <person name="Nakagawa S."/>
            <person name="Senoh A."/>
            <person name="Mizoguchi H."/>
            <person name="Goto Y."/>
            <person name="Shimizu F."/>
            <person name="Wakebe H."/>
            <person name="Hishigaki H."/>
            <person name="Watanabe T."/>
            <person name="Sugiyama A."/>
            <person name="Takemoto M."/>
            <person name="Kawakami B."/>
            <person name="Yamazaki M."/>
            <person name="Watanabe K."/>
            <person name="Kumagai A."/>
            <person name="Itakura S."/>
            <person name="Fukuzumi Y."/>
            <person name="Fujimori Y."/>
            <person name="Komiyama M."/>
            <person name="Tashiro H."/>
            <person name="Tanigami A."/>
            <person name="Fujiwara T."/>
            <person name="Ono T."/>
            <person name="Yamada K."/>
            <person name="Fujii Y."/>
            <person name="Ozaki K."/>
            <person name="Hirao M."/>
            <person name="Ohmori Y."/>
            <person name="Kawabata A."/>
            <person name="Hikiji T."/>
            <person name="Kobatake N."/>
            <person name="Inagaki H."/>
            <person name="Ikema Y."/>
            <person name="Okamoto S."/>
            <person name="Okitani R."/>
            <person name="Kawakami T."/>
            <person name="Noguchi S."/>
            <person name="Itoh T."/>
            <person name="Shigeta K."/>
            <person name="Senba T."/>
            <person name="Matsumura K."/>
            <person name="Nakajima Y."/>
            <person name="Mizuno T."/>
            <person name="Morinaga M."/>
            <person name="Sasaki M."/>
            <person name="Togashi T."/>
            <person name="Oyama M."/>
            <person name="Hata H."/>
            <person name="Watanabe M."/>
            <person name="Komatsu T."/>
            <person name="Mizushima-Sugano J."/>
            <person name="Satoh T."/>
            <person name="Shirai Y."/>
            <person name="Takahashi Y."/>
            <person name="Nakagawa K."/>
            <person name="Okumura K."/>
            <person name="Nagase T."/>
            <person name="Nomura N."/>
            <person name="Kikuchi H."/>
            <person name="Masuho Y."/>
            <person name="Yamashita R."/>
            <person name="Nakai K."/>
            <person name="Yada T."/>
            <person name="Nakamura Y."/>
            <person name="Ohara O."/>
            <person name="Isogai T."/>
            <person name="Sugano S."/>
        </authorList>
    </citation>
    <scope>NUCLEOTIDE SEQUENCE [LARGE SCALE MRNA] (ISOFORM 1)</scope>
</reference>
<reference key="5">
    <citation type="journal article" date="2001" name="Nature">
        <title>The DNA sequence and comparative analysis of human chromosome 20.</title>
        <authorList>
            <person name="Deloukas P."/>
            <person name="Matthews L.H."/>
            <person name="Ashurst J.L."/>
            <person name="Burton J."/>
            <person name="Gilbert J.G.R."/>
            <person name="Jones M."/>
            <person name="Stavrides G."/>
            <person name="Almeida J.P."/>
            <person name="Babbage A.K."/>
            <person name="Bagguley C.L."/>
            <person name="Bailey J."/>
            <person name="Barlow K.F."/>
            <person name="Bates K.N."/>
            <person name="Beard L.M."/>
            <person name="Beare D.M."/>
            <person name="Beasley O.P."/>
            <person name="Bird C.P."/>
            <person name="Blakey S.E."/>
            <person name="Bridgeman A.M."/>
            <person name="Brown A.J."/>
            <person name="Buck D."/>
            <person name="Burrill W.D."/>
            <person name="Butler A.P."/>
            <person name="Carder C."/>
            <person name="Carter N.P."/>
            <person name="Chapman J.C."/>
            <person name="Clamp M."/>
            <person name="Clark G."/>
            <person name="Clark L.N."/>
            <person name="Clark S.Y."/>
            <person name="Clee C.M."/>
            <person name="Clegg S."/>
            <person name="Cobley V.E."/>
            <person name="Collier R.E."/>
            <person name="Connor R.E."/>
            <person name="Corby N.R."/>
            <person name="Coulson A."/>
            <person name="Coville G.J."/>
            <person name="Deadman R."/>
            <person name="Dhami P.D."/>
            <person name="Dunn M."/>
            <person name="Ellington A.G."/>
            <person name="Frankland J.A."/>
            <person name="Fraser A."/>
            <person name="French L."/>
            <person name="Garner P."/>
            <person name="Grafham D.V."/>
            <person name="Griffiths C."/>
            <person name="Griffiths M.N.D."/>
            <person name="Gwilliam R."/>
            <person name="Hall R.E."/>
            <person name="Hammond S."/>
            <person name="Harley J.L."/>
            <person name="Heath P.D."/>
            <person name="Ho S."/>
            <person name="Holden J.L."/>
            <person name="Howden P.J."/>
            <person name="Huckle E."/>
            <person name="Hunt A.R."/>
            <person name="Hunt S.E."/>
            <person name="Jekosch K."/>
            <person name="Johnson C.M."/>
            <person name="Johnson D."/>
            <person name="Kay M.P."/>
            <person name="Kimberley A.M."/>
            <person name="King A."/>
            <person name="Knights A."/>
            <person name="Laird G.K."/>
            <person name="Lawlor S."/>
            <person name="Lehvaeslaiho M.H."/>
            <person name="Leversha M.A."/>
            <person name="Lloyd C."/>
            <person name="Lloyd D.M."/>
            <person name="Lovell J.D."/>
            <person name="Marsh V.L."/>
            <person name="Martin S.L."/>
            <person name="McConnachie L.J."/>
            <person name="McLay K."/>
            <person name="McMurray A.A."/>
            <person name="Milne S.A."/>
            <person name="Mistry D."/>
            <person name="Moore M.J.F."/>
            <person name="Mullikin J.C."/>
            <person name="Nickerson T."/>
            <person name="Oliver K."/>
            <person name="Parker A."/>
            <person name="Patel R."/>
            <person name="Pearce T.A.V."/>
            <person name="Peck A.I."/>
            <person name="Phillimore B.J.C.T."/>
            <person name="Prathalingam S.R."/>
            <person name="Plumb R.W."/>
            <person name="Ramsay H."/>
            <person name="Rice C.M."/>
            <person name="Ross M.T."/>
            <person name="Scott C.E."/>
            <person name="Sehra H.K."/>
            <person name="Shownkeen R."/>
            <person name="Sims S."/>
            <person name="Skuce C.D."/>
            <person name="Smith M.L."/>
            <person name="Soderlund C."/>
            <person name="Steward C.A."/>
            <person name="Sulston J.E."/>
            <person name="Swann R.M."/>
            <person name="Sycamore N."/>
            <person name="Taylor R."/>
            <person name="Tee L."/>
            <person name="Thomas D.W."/>
            <person name="Thorpe A."/>
            <person name="Tracey A."/>
            <person name="Tromans A.C."/>
            <person name="Vaudin M."/>
            <person name="Wall M."/>
            <person name="Wallis J.M."/>
            <person name="Whitehead S.L."/>
            <person name="Whittaker P."/>
            <person name="Willey D.L."/>
            <person name="Williams L."/>
            <person name="Williams S.A."/>
            <person name="Wilming L."/>
            <person name="Wray P.W."/>
            <person name="Hubbard T."/>
            <person name="Durbin R.M."/>
            <person name="Bentley D.R."/>
            <person name="Beck S."/>
            <person name="Rogers J."/>
        </authorList>
    </citation>
    <scope>NUCLEOTIDE SEQUENCE [LARGE SCALE GENOMIC DNA]</scope>
</reference>
<reference key="6">
    <citation type="submission" date="2005-09" db="EMBL/GenBank/DDBJ databases">
        <authorList>
            <person name="Mural R.J."/>
            <person name="Istrail S."/>
            <person name="Sutton G.G."/>
            <person name="Florea L."/>
            <person name="Halpern A.L."/>
            <person name="Mobarry C.M."/>
            <person name="Lippert R."/>
            <person name="Walenz B."/>
            <person name="Shatkay H."/>
            <person name="Dew I."/>
            <person name="Miller J.R."/>
            <person name="Flanigan M.J."/>
            <person name="Edwards N.J."/>
            <person name="Bolanos R."/>
            <person name="Fasulo D."/>
            <person name="Halldorsson B.V."/>
            <person name="Hannenhalli S."/>
            <person name="Turner R."/>
            <person name="Yooseph S."/>
            <person name="Lu F."/>
            <person name="Nusskern D.R."/>
            <person name="Shue B.C."/>
            <person name="Zheng X.H."/>
            <person name="Zhong F."/>
            <person name="Delcher A.L."/>
            <person name="Huson D.H."/>
            <person name="Kravitz S.A."/>
            <person name="Mouchard L."/>
            <person name="Reinert K."/>
            <person name="Remington K.A."/>
            <person name="Clark A.G."/>
            <person name="Waterman M.S."/>
            <person name="Eichler E.E."/>
            <person name="Adams M.D."/>
            <person name="Hunkapiller M.W."/>
            <person name="Myers E.W."/>
            <person name="Venter J.C."/>
        </authorList>
    </citation>
    <scope>NUCLEOTIDE SEQUENCE [LARGE SCALE GENOMIC DNA]</scope>
</reference>
<reference key="7">
    <citation type="journal article" date="2004" name="Genome Res.">
        <title>The status, quality, and expansion of the NIH full-length cDNA project: the Mammalian Gene Collection (MGC).</title>
        <authorList>
            <consortium name="The MGC Project Team"/>
        </authorList>
    </citation>
    <scope>NUCLEOTIDE SEQUENCE [LARGE SCALE MRNA] (ISOFORM 2)</scope>
    <source>
        <tissue>Brain</tissue>
    </source>
</reference>
<reference key="8">
    <citation type="journal article" date="1993" name="Glycobiology">
        <title>O-linked fucose and other post-translational modifications unique to EGF modules.</title>
        <authorList>
            <person name="Harris R.J."/>
            <person name="Spellman M.W."/>
        </authorList>
    </citation>
    <scope>FUNCTION</scope>
</reference>
<reference key="9">
    <citation type="journal article" date="2009" name="J. Proteome Res.">
        <title>Glycoproteomics analysis of human liver tissue by combination of multiple enzyme digestion and hydrazide chemistry.</title>
        <authorList>
            <person name="Chen R."/>
            <person name="Jiang X."/>
            <person name="Sun D."/>
            <person name="Han G."/>
            <person name="Wang F."/>
            <person name="Ye M."/>
            <person name="Wang L."/>
            <person name="Zou H."/>
        </authorList>
    </citation>
    <scope>GLYCOSYLATION [LARGE SCALE ANALYSIS] AT ASN-160</scope>
    <source>
        <tissue>Liver</tissue>
    </source>
</reference>
<reference key="10">
    <citation type="journal article" date="2011" name="BMC Syst. Biol.">
        <title>Initial characterization of the human central proteome.</title>
        <authorList>
            <person name="Burkard T.R."/>
            <person name="Planyavsky M."/>
            <person name="Kaupe I."/>
            <person name="Breitwieser F.P."/>
            <person name="Buerckstuemmer T."/>
            <person name="Bennett K.L."/>
            <person name="Superti-Furga G."/>
            <person name="Colinge J."/>
        </authorList>
    </citation>
    <scope>IDENTIFICATION BY MASS SPECTROMETRY [LARGE SCALE ANALYSIS]</scope>
</reference>
<reference key="11">
    <citation type="journal article" date="2013" name="Am. J. Hum. Genet.">
        <title>Mutations in POFUT1, encoding protein O-fucosyltransferase 1, cause generalized Dowling-Degos disease.</title>
        <authorList>
            <person name="Li M."/>
            <person name="Cheng R."/>
            <person name="Liang J."/>
            <person name="Yan H."/>
            <person name="Zhang H."/>
            <person name="Yang L."/>
            <person name="Li C."/>
            <person name="Jiao Q."/>
            <person name="Lu Z."/>
            <person name="He J."/>
            <person name="Ji J."/>
            <person name="Shen Z."/>
            <person name="Li C."/>
            <person name="Hao F."/>
            <person name="Yu H."/>
            <person name="Yao Z."/>
        </authorList>
    </citation>
    <scope>INVOLVEMENT IN DDD2</scope>
</reference>
<reference key="12">
    <citation type="journal article" date="2015" name="Proteomics">
        <title>N-terminome analysis of the human mitochondrial proteome.</title>
        <authorList>
            <person name="Vaca Jacome A.S."/>
            <person name="Rabilloud T."/>
            <person name="Schaeffer-Reiss C."/>
            <person name="Rompais M."/>
            <person name="Ayoub D."/>
            <person name="Lane L."/>
            <person name="Bairoch A."/>
            <person name="Van Dorsselaer A."/>
            <person name="Carapito C."/>
        </authorList>
    </citation>
    <scope>IDENTIFICATION BY MASS SPECTROMETRY [LARGE SCALE ANALYSIS]</scope>
</reference>
<reference evidence="10 11" key="13">
    <citation type="journal article" date="2017" name="Glycobiology">
        <title>Structure of human POFUT1, its requirement in ligand-independent oncogenic Notch signaling, and functional effects of Dowling-Degos mutations.</title>
        <authorList>
            <person name="McMillan B.J."/>
            <person name="Zimmerman B."/>
            <person name="Egan E.D."/>
            <person name="Lofgren M."/>
            <person name="Xu X."/>
            <person name="Hesser A."/>
            <person name="Blacklow S.C."/>
        </authorList>
    </citation>
    <scope>X-RAY CRYSTALLOGRAPHY (2.09 ANGSTROMS) OF 24-384 IN COMPLEX WITH GDP-FUCOSE</scope>
    <scope>FUNCTION IN NOTCH SIGNALING</scope>
    <scope>GLYCOSYLATION AT ASN-62</scope>
    <scope>DISULFIDE BONDS</scope>
    <scope>MUTAGENESIS OF ARG-240; MET-262; SER-356 AND ARG-366</scope>
</reference>
<feature type="signal peptide" evidence="2">
    <location>
        <begin position="1"/>
        <end position="26"/>
    </location>
</feature>
<feature type="chain" id="PRO_0000012148" description="GDP-fucose protein O-fucosyltransferase 1">
    <location>
        <begin position="27"/>
        <end position="388"/>
    </location>
</feature>
<feature type="short sequence motif" description="Prevents secretion from ER" evidence="2">
    <location>
        <begin position="385"/>
        <end position="388"/>
    </location>
</feature>
<feature type="binding site" evidence="6 11">
    <location>
        <begin position="43"/>
        <end position="46"/>
    </location>
    <ligand>
        <name>substrate</name>
    </ligand>
</feature>
<feature type="binding site" evidence="6 11">
    <location>
        <begin position="238"/>
        <end position="240"/>
    </location>
    <ligand>
        <name>substrate</name>
    </ligand>
</feature>
<feature type="binding site" evidence="6 11">
    <location>
        <position position="340"/>
    </location>
    <ligand>
        <name>substrate</name>
    </ligand>
</feature>
<feature type="binding site" evidence="6 11">
    <location>
        <begin position="357"/>
        <end position="358"/>
    </location>
    <ligand>
        <name>substrate</name>
    </ligand>
</feature>
<feature type="glycosylation site" description="N-linked (GlcNAc...) asparagine" evidence="6 10">
    <location>
        <position position="62"/>
    </location>
</feature>
<feature type="glycosylation site" description="N-linked (GlcNAc...) asparagine" evidence="4">
    <location>
        <position position="160"/>
    </location>
</feature>
<feature type="disulfide bond" evidence="6 10 11">
    <location>
        <begin position="38"/>
        <end position="40"/>
    </location>
</feature>
<feature type="disulfide bond" evidence="6 10 11">
    <location>
        <begin position="126"/>
        <end position="140"/>
    </location>
</feature>
<feature type="disulfide bond" evidence="6 10 11">
    <location>
        <begin position="249"/>
        <end position="283"/>
    </location>
</feature>
<feature type="disulfide bond" evidence="6 10 11">
    <location>
        <begin position="267"/>
        <end position="354"/>
    </location>
</feature>
<feature type="splice variant" id="VSP_001809" description="In isoform 2." evidence="8">
    <original>FSPKEHPVLALPGAPAQFPVLEEHRPLQKYMVWSDEMVKTGEAQIHAHLVRPYVGIHLRIGSDWKNACAMLKDGTAGSHFMASPQCVGYSRSTAAPLTMTMCLPDLKEIQRAVKLWVRSLDAQSVYVATDSESYVPELQQLFKGKVKVVSLKPEVAQVDLYILGQADHFIGNCVSSFTAFVKRERDLQGRPSSFFGMDRPPKLRDEF</original>
    <variation>RENHSCVTLLFPR</variation>
    <location>
        <begin position="182"/>
        <end position="388"/>
    </location>
</feature>
<feature type="sequence variant" id="VAR_049231" description="In dbSNP:rs17268666.">
    <original>L</original>
    <variation>F</variation>
    <location>
        <position position="322"/>
    </location>
</feature>
<feature type="sequence variant" id="VAR_049232" description="In dbSNP:rs35259534.">
    <original>D</original>
    <variation>N</variation>
    <location>
        <position position="348"/>
    </location>
</feature>
<feature type="mutagenesis site" description="Strongly impaired ability to activate NOTCH signaling." evidence="6">
    <original>R</original>
    <variation>A</variation>
    <variation>C</variation>
    <location>
        <position position="240"/>
    </location>
</feature>
<feature type="mutagenesis site" description="No effect on ability to activate NOTCH signaling." evidence="6">
    <original>M</original>
    <variation>T</variation>
    <location>
        <position position="262"/>
    </location>
</feature>
<feature type="mutagenesis site" description="Abolishes ability to activate NOTCH signaling." evidence="6">
    <original>S</original>
    <variation>F</variation>
    <location>
        <position position="356"/>
    </location>
</feature>
<feature type="mutagenesis site" description="Strongly impaired ability to activate NOTCH signaling." evidence="6">
    <original>R</original>
    <variation>W</variation>
    <location>
        <position position="366"/>
    </location>
</feature>
<feature type="strand" evidence="12">
    <location>
        <begin position="34"/>
        <end position="37"/>
    </location>
</feature>
<feature type="strand" evidence="12">
    <location>
        <begin position="41"/>
        <end position="43"/>
    </location>
</feature>
<feature type="helix" evidence="12">
    <location>
        <begin position="44"/>
        <end position="61"/>
    </location>
</feature>
<feature type="strand" evidence="12">
    <location>
        <begin position="64"/>
        <end position="67"/>
    </location>
</feature>
<feature type="strand" evidence="12">
    <location>
        <begin position="70"/>
        <end position="72"/>
    </location>
</feature>
<feature type="strand" evidence="12">
    <location>
        <begin position="83"/>
        <end position="85"/>
    </location>
</feature>
<feature type="helix" evidence="12">
    <location>
        <begin position="87"/>
        <end position="90"/>
    </location>
</feature>
<feature type="strand" evidence="13">
    <location>
        <begin position="91"/>
        <end position="93"/>
    </location>
</feature>
<feature type="helix" evidence="12">
    <location>
        <begin position="94"/>
        <end position="98"/>
    </location>
</feature>
<feature type="strand" evidence="12">
    <location>
        <begin position="102"/>
        <end position="104"/>
    </location>
</feature>
<feature type="helix" evidence="12">
    <location>
        <begin position="105"/>
        <end position="111"/>
    </location>
</feature>
<feature type="helix" evidence="12">
    <location>
        <begin position="113"/>
        <end position="116"/>
    </location>
</feature>
<feature type="helix" evidence="12">
    <location>
        <begin position="119"/>
        <end position="121"/>
    </location>
</feature>
<feature type="strand" evidence="12">
    <location>
        <begin position="123"/>
        <end position="127"/>
    </location>
</feature>
<feature type="helix" evidence="12">
    <location>
        <begin position="128"/>
        <end position="132"/>
    </location>
</feature>
<feature type="strand" evidence="12">
    <location>
        <begin position="134"/>
        <end position="136"/>
    </location>
</feature>
<feature type="strand" evidence="12">
    <location>
        <begin position="142"/>
        <end position="145"/>
    </location>
</feature>
<feature type="helix" evidence="12">
    <location>
        <begin position="148"/>
        <end position="153"/>
    </location>
</feature>
<feature type="turn" evidence="12">
    <location>
        <begin position="154"/>
        <end position="156"/>
    </location>
</feature>
<feature type="strand" evidence="12">
    <location>
        <begin position="161"/>
        <end position="165"/>
    </location>
</feature>
<feature type="helix" evidence="12">
    <location>
        <begin position="172"/>
        <end position="174"/>
    </location>
</feature>
<feature type="helix" evidence="12">
    <location>
        <begin position="175"/>
        <end position="181"/>
    </location>
</feature>
<feature type="turn" evidence="12">
    <location>
        <begin position="184"/>
        <end position="186"/>
    </location>
</feature>
<feature type="strand" evidence="12">
    <location>
        <begin position="188"/>
        <end position="194"/>
    </location>
</feature>
<feature type="helix" evidence="12">
    <location>
        <begin position="203"/>
        <end position="211"/>
    </location>
</feature>
<feature type="helix" evidence="12">
    <location>
        <begin position="216"/>
        <end position="229"/>
    </location>
</feature>
<feature type="strand" evidence="12">
    <location>
        <begin position="232"/>
        <end position="239"/>
    </location>
</feature>
<feature type="helix" evidence="12">
    <location>
        <begin position="243"/>
        <end position="253"/>
    </location>
</feature>
<feature type="turn" evidence="12">
    <location>
        <begin position="262"/>
        <end position="264"/>
    </location>
</feature>
<feature type="helix" evidence="12">
    <location>
        <begin position="265"/>
        <end position="268"/>
    </location>
</feature>
<feature type="helix" evidence="12">
    <location>
        <begin position="272"/>
        <end position="274"/>
    </location>
</feature>
<feature type="helix" evidence="12">
    <location>
        <begin position="280"/>
        <end position="283"/>
    </location>
</feature>
<feature type="helix" evidence="12">
    <location>
        <begin position="287"/>
        <end position="301"/>
    </location>
</feature>
<feature type="strand" evidence="12">
    <location>
        <begin position="304"/>
        <end position="312"/>
    </location>
</feature>
<feature type="helix" evidence="12">
    <location>
        <begin position="316"/>
        <end position="322"/>
    </location>
</feature>
<feature type="turn" evidence="12">
    <location>
        <begin position="323"/>
        <end position="325"/>
    </location>
</feature>
<feature type="strand" evidence="12">
    <location>
        <begin position="326"/>
        <end position="330"/>
    </location>
</feature>
<feature type="helix" evidence="12">
    <location>
        <begin position="337"/>
        <end position="345"/>
    </location>
</feature>
<feature type="strand" evidence="12">
    <location>
        <begin position="347"/>
        <end position="352"/>
    </location>
</feature>
<feature type="helix" evidence="12">
    <location>
        <begin position="357"/>
        <end position="369"/>
    </location>
</feature>
<feature type="strand" evidence="12">
    <location>
        <begin position="373"/>
        <end position="375"/>
    </location>
</feature>
<feature type="strand" evidence="12">
    <location>
        <begin position="378"/>
        <end position="380"/>
    </location>
</feature>
<name>OFUT1_HUMAN</name>
<protein>
    <recommendedName>
        <fullName>GDP-fucose protein O-fucosyltransferase 1</fullName>
        <ecNumber evidence="3">2.4.1.221</ecNumber>
    </recommendedName>
    <alternativeName>
        <fullName>Peptide-O-fucosyltransferase 1</fullName>
        <shortName>O-FucT-1</shortName>
    </alternativeName>
</protein>
<sequence length="388" mass="43956">MGAAAWARPLSVSFLLLLLPLPGMPAGSWDPAGYLLYCPCMGRFGNQADHFLGSLAFAKLLNRTLAVPPWIEYQHHKPPFTNLHVSYQKYFKLEPLQAYHRVISLEDFMEKLAPTHWPPEKRVAYCFEVAAQRSPDKKTCPMKEGNPFGPFWDQFHVSFNKSELFTGISFSASYREQWSQRFSPKEHPVLALPGAPAQFPVLEEHRPLQKYMVWSDEMVKTGEAQIHAHLVRPYVGIHLRIGSDWKNACAMLKDGTAGSHFMASPQCVGYSRSTAAPLTMTMCLPDLKEIQRAVKLWVRSLDAQSVYVATDSESYVPELQQLFKGKVKVVSLKPEVAQVDLYILGQADHFIGNCVSSFTAFVKRERDLQGRPSSFFGMDRPPKLRDEF</sequence>
<proteinExistence type="evidence at protein level"/>